<accession>Q9VZL7</accession>
<accession>A1C3K8</accession>
<accession>B7Z0B4</accession>
<name>GR63A_DROME</name>
<sequence>MRPSGEKVVKGHGQGNSGHSLSGMANYYRRKKGDAVFLNAKPLNSANAQAYLYGVRKYSIGLAERLDADYEAPPLDRKKSSDSTASNNPEFKPSVFYRNIDPINWFLRIIGVLPIVRHGPARAKFEMNSASFIYSVVFFVLLACYVGYVANNRIHIVRSLSGPFEEAVIAYLFLVNILPIMIIPILWYEARKIAKLFNDWDDFEVLYYQISGHSLPLKLRQKAVYIAIVLPILSVLSVVITHVTMSDLNINQVVPYCILDNLTAMLGAWWFLICEAMSITAHLLAERFQKALKHIGPAAMVADYRVLWLRLSKLTRDTGNALCYTFVFMSLYLFFIITLSIYGLMSQLSEGFGIKDIGLTITALWNIGLLFYICDEAHYASVNVRTNFQKKLLMVELNWMNSDAQTEINMFLRATEMNPSTINCGGFFDVNRTLFKGLLTTMVTYLVVLLQFQISIPTDKGDSEGANNITVVDFVMDSLDNDMSLMGASTLSTTTVGTTLPPPIMKLKGRKG</sequence>
<feature type="chain" id="PRO_0000216527" description="Gustatory and odorant receptor 63a">
    <location>
        <begin position="1"/>
        <end position="512"/>
    </location>
</feature>
<feature type="topological domain" description="Cytoplasmic" evidence="1">
    <location>
        <begin position="1"/>
        <end position="129"/>
    </location>
</feature>
<feature type="transmembrane region" description="Helical; Name=1" evidence="2">
    <location>
        <begin position="130"/>
        <end position="150"/>
    </location>
</feature>
<feature type="topological domain" description="Extracellular" evidence="1">
    <location>
        <begin position="151"/>
        <end position="166"/>
    </location>
</feature>
<feature type="transmembrane region" description="Helical; Name=2" evidence="2">
    <location>
        <begin position="167"/>
        <end position="187"/>
    </location>
</feature>
<feature type="topological domain" description="Cytoplasmic" evidence="1">
    <location>
        <begin position="188"/>
        <end position="222"/>
    </location>
</feature>
<feature type="transmembrane region" description="Helical; Name=3" evidence="2">
    <location>
        <begin position="223"/>
        <end position="243"/>
    </location>
</feature>
<feature type="topological domain" description="Extracellular" evidence="1">
    <location>
        <begin position="244"/>
        <end position="265"/>
    </location>
</feature>
<feature type="transmembrane region" description="Helical; Name=4" evidence="2">
    <location>
        <begin position="266"/>
        <end position="285"/>
    </location>
</feature>
<feature type="topological domain" description="Cytoplasmic" evidence="1">
    <location>
        <begin position="286"/>
        <end position="324"/>
    </location>
</feature>
<feature type="transmembrane region" description="Helical; Name=5" evidence="2">
    <location>
        <begin position="325"/>
        <end position="345"/>
    </location>
</feature>
<feature type="topological domain" description="Extracellular" evidence="1">
    <location>
        <begin position="346"/>
        <end position="350"/>
    </location>
</feature>
<feature type="transmembrane region" description="Helical; Name=6" evidence="2">
    <location>
        <begin position="351"/>
        <end position="371"/>
    </location>
</feature>
<feature type="topological domain" description="Cytoplasmic" evidence="1">
    <location>
        <begin position="372"/>
        <end position="436"/>
    </location>
</feature>
<feature type="transmembrane region" description="Helical; Name=7" evidence="2">
    <location>
        <begin position="437"/>
        <end position="457"/>
    </location>
</feature>
<feature type="topological domain" description="Extracellular" evidence="1">
    <location>
        <begin position="458"/>
        <end position="512"/>
    </location>
</feature>
<feature type="region of interest" description="Disordered" evidence="3">
    <location>
        <begin position="1"/>
        <end position="24"/>
    </location>
</feature>
<feature type="glycosylation site" description="N-linked (GlcNAc...) asparagine" evidence="2">
    <location>
        <position position="261"/>
    </location>
</feature>
<feature type="glycosylation site" description="N-linked (GlcNAc...) asparagine" evidence="2">
    <location>
        <position position="468"/>
    </location>
</feature>
<keyword id="KW-0085">Behavior</keyword>
<keyword id="KW-1003">Cell membrane</keyword>
<keyword id="KW-0325">Glycoprotein</keyword>
<keyword id="KW-0472">Membrane</keyword>
<keyword id="KW-0552">Olfaction</keyword>
<keyword id="KW-0675">Receptor</keyword>
<keyword id="KW-1185">Reference proteome</keyword>
<keyword id="KW-0716">Sensory transduction</keyword>
<keyword id="KW-0807">Transducer</keyword>
<keyword id="KW-0812">Transmembrane</keyword>
<keyword id="KW-1133">Transmembrane helix</keyword>
<comment type="function">
    <text evidence="5 6 7 8 10">Gustatory and odorant receptor which mediates acceptance or avoidance behavior, depending on its substrates. Gr21a and Gr63a together are sufficient for carbon dioxide detection and avoidance behavior. It is possible that the CO(2) receptors Gr63a and Gr21a activate the TRPC channels through Galpha49B and Plc21C. This innate olfactory avoidance behavior can be inhibited by inhibitory interactions of the odors such as 1-hexanol and 2,3-butanedione with Gr21a and Gr63a.</text>
</comment>
<comment type="subunit">
    <text evidence="6">Gr21a and Gr63a probably form a heterodimer that responds to CO(2).</text>
</comment>
<comment type="subcellular location">
    <subcellularLocation>
        <location evidence="1">Cell membrane</location>
        <topology evidence="1">Multi-pass membrane protein</topology>
    </subcellularLocation>
</comment>
<comment type="tissue specificity">
    <text evidence="4 5">Expressed in the medial aspect of the third antennal segment. Carbon dioxide-responsive neurons coexpress Gr21a and Gr63a in a pair of chemosensory receptors at both larval and adult life stages.</text>
</comment>
<comment type="induction">
    <text evidence="9">The Myb-MuvB complex mediates neuron-specific expression of the carbon dioxide receptor genes Gr63a and Gr21a. Conversely, Mip120 and E2F2, are required for repression of Gr63a in inappropriate neurons.</text>
</comment>
<comment type="similarity">
    <text evidence="11">Belongs to the insect chemoreceptor superfamily. Gustatory receptor (GR) family. Gr21a subfamily.</text>
</comment>
<comment type="sequence caution" evidence="11">
    <conflict type="erroneous initiation">
        <sequence resource="EMBL-CDS" id="ACL83239"/>
    </conflict>
    <text>Truncated N-terminus.</text>
</comment>
<gene>
    <name type="primary">Gr63a</name>
    <name type="ORF">CG14979</name>
</gene>
<proteinExistence type="evidence at protein level"/>
<protein>
    <recommendedName>
        <fullName>Gustatory and odorant receptor 63a</fullName>
    </recommendedName>
</protein>
<organism>
    <name type="scientific">Drosophila melanogaster</name>
    <name type="common">Fruit fly</name>
    <dbReference type="NCBI Taxonomy" id="7227"/>
    <lineage>
        <taxon>Eukaryota</taxon>
        <taxon>Metazoa</taxon>
        <taxon>Ecdysozoa</taxon>
        <taxon>Arthropoda</taxon>
        <taxon>Hexapoda</taxon>
        <taxon>Insecta</taxon>
        <taxon>Pterygota</taxon>
        <taxon>Neoptera</taxon>
        <taxon>Endopterygota</taxon>
        <taxon>Diptera</taxon>
        <taxon>Brachycera</taxon>
        <taxon>Muscomorpha</taxon>
        <taxon>Ephydroidea</taxon>
        <taxon>Drosophilidae</taxon>
        <taxon>Drosophila</taxon>
        <taxon>Sophophora</taxon>
    </lineage>
</organism>
<reference key="1">
    <citation type="journal article" date="2007" name="Nature">
        <title>Two chemosensory receptors together mediate carbon dioxide detection in Drosophila.</title>
        <authorList>
            <person name="Jones W.D."/>
            <person name="Cayirlioglu P."/>
            <person name="Grunwald Kadow I."/>
            <person name="Vosshall L.B."/>
        </authorList>
    </citation>
    <scope>NUCLEOTIDE SEQUENCE [GENOMIC DNA]</scope>
    <scope>FUNCTION</scope>
    <scope>TISSUE SPECIFICITY</scope>
</reference>
<reference key="2">
    <citation type="journal article" date="2000" name="Science">
        <title>The genome sequence of Drosophila melanogaster.</title>
        <authorList>
            <person name="Adams M.D."/>
            <person name="Celniker S.E."/>
            <person name="Holt R.A."/>
            <person name="Evans C.A."/>
            <person name="Gocayne J.D."/>
            <person name="Amanatides P.G."/>
            <person name="Scherer S.E."/>
            <person name="Li P.W."/>
            <person name="Hoskins R.A."/>
            <person name="Galle R.F."/>
            <person name="George R.A."/>
            <person name="Lewis S.E."/>
            <person name="Richards S."/>
            <person name="Ashburner M."/>
            <person name="Henderson S.N."/>
            <person name="Sutton G.G."/>
            <person name="Wortman J.R."/>
            <person name="Yandell M.D."/>
            <person name="Zhang Q."/>
            <person name="Chen L.X."/>
            <person name="Brandon R.C."/>
            <person name="Rogers Y.-H.C."/>
            <person name="Blazej R.G."/>
            <person name="Champe M."/>
            <person name="Pfeiffer B.D."/>
            <person name="Wan K.H."/>
            <person name="Doyle C."/>
            <person name="Baxter E.G."/>
            <person name="Helt G."/>
            <person name="Nelson C.R."/>
            <person name="Miklos G.L.G."/>
            <person name="Abril J.F."/>
            <person name="Agbayani A."/>
            <person name="An H.-J."/>
            <person name="Andrews-Pfannkoch C."/>
            <person name="Baldwin D."/>
            <person name="Ballew R.M."/>
            <person name="Basu A."/>
            <person name="Baxendale J."/>
            <person name="Bayraktaroglu L."/>
            <person name="Beasley E.M."/>
            <person name="Beeson K.Y."/>
            <person name="Benos P.V."/>
            <person name="Berman B.P."/>
            <person name="Bhandari D."/>
            <person name="Bolshakov S."/>
            <person name="Borkova D."/>
            <person name="Botchan M.R."/>
            <person name="Bouck J."/>
            <person name="Brokstein P."/>
            <person name="Brottier P."/>
            <person name="Burtis K.C."/>
            <person name="Busam D.A."/>
            <person name="Butler H."/>
            <person name="Cadieu E."/>
            <person name="Center A."/>
            <person name="Chandra I."/>
            <person name="Cherry J.M."/>
            <person name="Cawley S."/>
            <person name="Dahlke C."/>
            <person name="Davenport L.B."/>
            <person name="Davies P."/>
            <person name="de Pablos B."/>
            <person name="Delcher A."/>
            <person name="Deng Z."/>
            <person name="Mays A.D."/>
            <person name="Dew I."/>
            <person name="Dietz S.M."/>
            <person name="Dodson K."/>
            <person name="Doup L.E."/>
            <person name="Downes M."/>
            <person name="Dugan-Rocha S."/>
            <person name="Dunkov B.C."/>
            <person name="Dunn P."/>
            <person name="Durbin K.J."/>
            <person name="Evangelista C.C."/>
            <person name="Ferraz C."/>
            <person name="Ferriera S."/>
            <person name="Fleischmann W."/>
            <person name="Fosler C."/>
            <person name="Gabrielian A.E."/>
            <person name="Garg N.S."/>
            <person name="Gelbart W.M."/>
            <person name="Glasser K."/>
            <person name="Glodek A."/>
            <person name="Gong F."/>
            <person name="Gorrell J.H."/>
            <person name="Gu Z."/>
            <person name="Guan P."/>
            <person name="Harris M."/>
            <person name="Harris N.L."/>
            <person name="Harvey D.A."/>
            <person name="Heiman T.J."/>
            <person name="Hernandez J.R."/>
            <person name="Houck J."/>
            <person name="Hostin D."/>
            <person name="Houston K.A."/>
            <person name="Howland T.J."/>
            <person name="Wei M.-H."/>
            <person name="Ibegwam C."/>
            <person name="Jalali M."/>
            <person name="Kalush F."/>
            <person name="Karpen G.H."/>
            <person name="Ke Z."/>
            <person name="Kennison J.A."/>
            <person name="Ketchum K.A."/>
            <person name="Kimmel B.E."/>
            <person name="Kodira C.D."/>
            <person name="Kraft C.L."/>
            <person name="Kravitz S."/>
            <person name="Kulp D."/>
            <person name="Lai Z."/>
            <person name="Lasko P."/>
            <person name="Lei Y."/>
            <person name="Levitsky A.A."/>
            <person name="Li J.H."/>
            <person name="Li Z."/>
            <person name="Liang Y."/>
            <person name="Lin X."/>
            <person name="Liu X."/>
            <person name="Mattei B."/>
            <person name="McIntosh T.C."/>
            <person name="McLeod M.P."/>
            <person name="McPherson D."/>
            <person name="Merkulov G."/>
            <person name="Milshina N.V."/>
            <person name="Mobarry C."/>
            <person name="Morris J."/>
            <person name="Moshrefi A."/>
            <person name="Mount S.M."/>
            <person name="Moy M."/>
            <person name="Murphy B."/>
            <person name="Murphy L."/>
            <person name="Muzny D.M."/>
            <person name="Nelson D.L."/>
            <person name="Nelson D.R."/>
            <person name="Nelson K.A."/>
            <person name="Nixon K."/>
            <person name="Nusskern D.R."/>
            <person name="Pacleb J.M."/>
            <person name="Palazzolo M."/>
            <person name="Pittman G.S."/>
            <person name="Pan S."/>
            <person name="Pollard J."/>
            <person name="Puri V."/>
            <person name="Reese M.G."/>
            <person name="Reinert K."/>
            <person name="Remington K."/>
            <person name="Saunders R.D.C."/>
            <person name="Scheeler F."/>
            <person name="Shen H."/>
            <person name="Shue B.C."/>
            <person name="Siden-Kiamos I."/>
            <person name="Simpson M."/>
            <person name="Skupski M.P."/>
            <person name="Smith T.J."/>
            <person name="Spier E."/>
            <person name="Spradling A.C."/>
            <person name="Stapleton M."/>
            <person name="Strong R."/>
            <person name="Sun E."/>
            <person name="Svirskas R."/>
            <person name="Tector C."/>
            <person name="Turner R."/>
            <person name="Venter E."/>
            <person name="Wang A.H."/>
            <person name="Wang X."/>
            <person name="Wang Z.-Y."/>
            <person name="Wassarman D.A."/>
            <person name="Weinstock G.M."/>
            <person name="Weissenbach J."/>
            <person name="Williams S.M."/>
            <person name="Woodage T."/>
            <person name="Worley K.C."/>
            <person name="Wu D."/>
            <person name="Yang S."/>
            <person name="Yao Q.A."/>
            <person name="Ye J."/>
            <person name="Yeh R.-F."/>
            <person name="Zaveri J.S."/>
            <person name="Zhan M."/>
            <person name="Zhang G."/>
            <person name="Zhao Q."/>
            <person name="Zheng L."/>
            <person name="Zheng X.H."/>
            <person name="Zhong F.N."/>
            <person name="Zhong W."/>
            <person name="Zhou X."/>
            <person name="Zhu S.C."/>
            <person name="Zhu X."/>
            <person name="Smith H.O."/>
            <person name="Gibbs R.A."/>
            <person name="Myers E.W."/>
            <person name="Rubin G.M."/>
            <person name="Venter J.C."/>
        </authorList>
    </citation>
    <scope>NUCLEOTIDE SEQUENCE [LARGE SCALE GENOMIC DNA]</scope>
    <source>
        <strain>Berkeley</strain>
    </source>
</reference>
<reference key="3">
    <citation type="journal article" date="2002" name="Genome Biol.">
        <title>Annotation of the Drosophila melanogaster euchromatic genome: a systematic review.</title>
        <authorList>
            <person name="Misra S."/>
            <person name="Crosby M.A."/>
            <person name="Mungall C.J."/>
            <person name="Matthews B.B."/>
            <person name="Campbell K.S."/>
            <person name="Hradecky P."/>
            <person name="Huang Y."/>
            <person name="Kaminker J.S."/>
            <person name="Millburn G.H."/>
            <person name="Prochnik S.E."/>
            <person name="Smith C.D."/>
            <person name="Tupy J.L."/>
            <person name="Whitfield E.J."/>
            <person name="Bayraktaroglu L."/>
            <person name="Berman B.P."/>
            <person name="Bettencourt B.R."/>
            <person name="Celniker S.E."/>
            <person name="de Grey A.D.N.J."/>
            <person name="Drysdale R.A."/>
            <person name="Harris N.L."/>
            <person name="Richter J."/>
            <person name="Russo S."/>
            <person name="Schroeder A.J."/>
            <person name="Shu S.Q."/>
            <person name="Stapleton M."/>
            <person name="Yamada C."/>
            <person name="Ashburner M."/>
            <person name="Gelbart W.M."/>
            <person name="Rubin G.M."/>
            <person name="Lewis S.E."/>
        </authorList>
    </citation>
    <scope>GENOME REANNOTATION</scope>
    <source>
        <strain>Berkeley</strain>
    </source>
</reference>
<reference key="4">
    <citation type="journal article" date="2001" name="Cell">
        <title>A chemosensory gene family encoding candidate gustatory and olfactory receptors in Drosophila.</title>
        <authorList>
            <person name="Scott K."/>
            <person name="Brady R. Jr."/>
            <person name="Cravchik A."/>
            <person name="Morozov P."/>
            <person name="Rzhetsky A."/>
            <person name="Zuker C."/>
            <person name="Axel R."/>
        </authorList>
    </citation>
    <scope>TISSUE SPECIFICITY</scope>
</reference>
<reference key="5">
    <citation type="journal article" date="2001" name="Curr. Biol.">
        <title>Spatially restricted expression of candidate taste receptors in the Drosophila gustatory system.</title>
        <authorList>
            <person name="Dunipace L."/>
            <person name="Meister S."/>
            <person name="McNealy C."/>
            <person name="Amrein H."/>
        </authorList>
    </citation>
    <scope>IDENTIFICATION</scope>
</reference>
<reference key="6">
    <citation type="journal article" date="2007" name="Curr. Biol.">
        <title>Light activation of an innate olfactory avoidance response in Drosophila.</title>
        <authorList>
            <person name="Suh G.S."/>
            <person name="Ben-Tabou de Leon S."/>
            <person name="Tanimoto H."/>
            <person name="Fiala A."/>
            <person name="Benzer S."/>
            <person name="Anderson D.J."/>
        </authorList>
    </citation>
    <scope>FUNCTION</scope>
</reference>
<reference key="7">
    <citation type="journal article" date="2007" name="Proc. Natl. Acad. Sci. U.S.A.">
        <title>The molecular basis of CO2 reception in Drosophila.</title>
        <authorList>
            <person name="Kwon J.Y."/>
            <person name="Dahanukar A."/>
            <person name="Weiss L.A."/>
            <person name="Carlson J.R."/>
        </authorList>
    </citation>
    <scope>FUNCTION</scope>
    <scope>SUBUNIT</scope>
</reference>
<reference key="8">
    <citation type="journal article" date="2009" name="Nature">
        <title>Modification of CO2 avoidance behaviour in Drosophila by inhibitory odorants.</title>
        <authorList>
            <person name="Turner S.L."/>
            <person name="Ray A."/>
        </authorList>
    </citation>
    <scope>FUNCTION</scope>
</reference>
<reference key="9">
    <citation type="journal article" date="2012" name="Genes Dev.">
        <title>Epigenetic regulation of olfactory receptor gene expression by the Myb-MuvB/dREAM complex.</title>
        <authorList>
            <person name="Sim C.K."/>
            <person name="Perry S."/>
            <person name="Tharadra S.K."/>
            <person name="Lipsick J.S."/>
            <person name="Ray A."/>
        </authorList>
    </citation>
    <scope>INDUCTION</scope>
</reference>
<reference key="10">
    <citation type="journal article" date="2012" name="PLoS ONE">
        <title>Mutants in Drosophila TRPC channels reduce olfactory sensitivity to carbon dioxide.</title>
        <authorList>
            <person name="Badsha F."/>
            <person name="Kain P."/>
            <person name="Prabhakar S."/>
            <person name="Sundaram S."/>
            <person name="Padinjat R."/>
            <person name="Rodrigues V."/>
            <person name="Hasan G."/>
        </authorList>
    </citation>
    <scope>FUNCTION</scope>
</reference>
<evidence type="ECO:0000250" key="1"/>
<evidence type="ECO:0000255" key="2"/>
<evidence type="ECO:0000256" key="3">
    <source>
        <dbReference type="SAM" id="MobiDB-lite"/>
    </source>
</evidence>
<evidence type="ECO:0000269" key="4">
    <source>
    </source>
</evidence>
<evidence type="ECO:0000269" key="5">
    <source>
    </source>
</evidence>
<evidence type="ECO:0000269" key="6">
    <source>
    </source>
</evidence>
<evidence type="ECO:0000269" key="7">
    <source>
    </source>
</evidence>
<evidence type="ECO:0000269" key="8">
    <source>
    </source>
</evidence>
<evidence type="ECO:0000269" key="9">
    <source>
    </source>
</evidence>
<evidence type="ECO:0000269" key="10">
    <source>
    </source>
</evidence>
<evidence type="ECO:0000305" key="11"/>
<dbReference type="EMBL" id="DQ989012">
    <property type="protein sequence ID" value="ABK97613.1"/>
    <property type="molecule type" value="Genomic_DNA"/>
</dbReference>
<dbReference type="EMBL" id="AE014296">
    <property type="protein sequence ID" value="ACL83239.1"/>
    <property type="status" value="ALT_INIT"/>
    <property type="molecule type" value="Genomic_DNA"/>
</dbReference>
<dbReference type="RefSeq" id="NP_001137883.1">
    <property type="nucleotide sequence ID" value="NM_001144411.1"/>
</dbReference>
<dbReference type="SMR" id="Q9VZL7"/>
<dbReference type="FunCoup" id="Q9VZL7">
    <property type="interactions" value="9"/>
</dbReference>
<dbReference type="STRING" id="7227.FBpp0113004"/>
<dbReference type="TCDB" id="1.A.69.2.1">
    <property type="family name" value="the heteromeric odorant receptor channel (horc) family"/>
</dbReference>
<dbReference type="GlyCosmos" id="Q9VZL7">
    <property type="glycosylation" value="2 sites, No reported glycans"/>
</dbReference>
<dbReference type="GlyGen" id="Q9VZL7">
    <property type="glycosylation" value="2 sites"/>
</dbReference>
<dbReference type="PaxDb" id="7227-FBpp0113004"/>
<dbReference type="EnsemblMetazoa" id="FBtr0114512">
    <property type="protein sequence ID" value="FBpp0113004"/>
    <property type="gene ID" value="FBgn0035468"/>
</dbReference>
<dbReference type="GeneID" id="38453"/>
<dbReference type="KEGG" id="dme:Dmel_CG14979"/>
<dbReference type="AGR" id="FB:FBgn0035468"/>
<dbReference type="CTD" id="38453"/>
<dbReference type="FlyBase" id="FBgn0035468">
    <property type="gene designation" value="Gr63a"/>
</dbReference>
<dbReference type="VEuPathDB" id="VectorBase:FBgn0035468"/>
<dbReference type="eggNOG" id="ENOG502SPS2">
    <property type="taxonomic scope" value="Eukaryota"/>
</dbReference>
<dbReference type="GeneTree" id="ENSGT00530000064835"/>
<dbReference type="HOGENOM" id="CLU_049090_0_0_1"/>
<dbReference type="InParanoid" id="Q9VZL7"/>
<dbReference type="OrthoDB" id="6625921at2759"/>
<dbReference type="PhylomeDB" id="Q9VZL7"/>
<dbReference type="BioGRID-ORCS" id="38453">
    <property type="hits" value="0 hits in 1 CRISPR screen"/>
</dbReference>
<dbReference type="GenomeRNAi" id="38453"/>
<dbReference type="PRO" id="PR:Q9VZL7"/>
<dbReference type="Proteomes" id="UP000000803">
    <property type="component" value="Chromosome 3L"/>
</dbReference>
<dbReference type="Bgee" id="FBgn0035468">
    <property type="expression patterns" value="Expressed in adult olfactory receptor neuron Gr21a/63a (Drosophila) in insect head and 4 other cell types or tissues"/>
</dbReference>
<dbReference type="GO" id="GO:0030424">
    <property type="term" value="C:axon"/>
    <property type="evidence" value="ECO:0000318"/>
    <property type="project" value="GO_Central"/>
</dbReference>
<dbReference type="GO" id="GO:0030425">
    <property type="term" value="C:dendrite"/>
    <property type="evidence" value="ECO:0000318"/>
    <property type="project" value="GO_Central"/>
</dbReference>
<dbReference type="GO" id="GO:0016020">
    <property type="term" value="C:membrane"/>
    <property type="evidence" value="ECO:0000303"/>
    <property type="project" value="UniProtKB"/>
</dbReference>
<dbReference type="GO" id="GO:0043025">
    <property type="term" value="C:neuronal cell body"/>
    <property type="evidence" value="ECO:0000318"/>
    <property type="project" value="GO_Central"/>
</dbReference>
<dbReference type="GO" id="GO:0005886">
    <property type="term" value="C:plasma membrane"/>
    <property type="evidence" value="ECO:0000250"/>
    <property type="project" value="FlyBase"/>
</dbReference>
<dbReference type="GO" id="GO:0015276">
    <property type="term" value="F:ligand-gated monoatomic ion channel activity"/>
    <property type="evidence" value="ECO:0000250"/>
    <property type="project" value="FlyBase"/>
</dbReference>
<dbReference type="GO" id="GO:0008527">
    <property type="term" value="F:taste receptor activity"/>
    <property type="evidence" value="ECO:0000303"/>
    <property type="project" value="UniProtKB"/>
</dbReference>
<dbReference type="GO" id="GO:0003031">
    <property type="term" value="P:detection of carbon dioxide"/>
    <property type="evidence" value="ECO:0000316"/>
    <property type="project" value="FlyBase"/>
</dbReference>
<dbReference type="GO" id="GO:0050912">
    <property type="term" value="P:detection of chemical stimulus involved in sensory perception of taste"/>
    <property type="evidence" value="ECO:0000303"/>
    <property type="project" value="UniProtKB"/>
</dbReference>
<dbReference type="GO" id="GO:0008340">
    <property type="term" value="P:determination of adult lifespan"/>
    <property type="evidence" value="ECO:0000315"/>
    <property type="project" value="FlyBase"/>
</dbReference>
<dbReference type="GO" id="GO:0034220">
    <property type="term" value="P:monoatomic ion transmembrane transport"/>
    <property type="evidence" value="ECO:0000250"/>
    <property type="project" value="FlyBase"/>
</dbReference>
<dbReference type="GO" id="GO:0010037">
    <property type="term" value="P:response to carbon dioxide"/>
    <property type="evidence" value="ECO:0000315"/>
    <property type="project" value="FlyBase"/>
</dbReference>
<dbReference type="GO" id="GO:0007608">
    <property type="term" value="P:sensory perception of smell"/>
    <property type="evidence" value="ECO:0007669"/>
    <property type="project" value="UniProtKB-KW"/>
</dbReference>
<dbReference type="GO" id="GO:0050909">
    <property type="term" value="P:sensory perception of taste"/>
    <property type="evidence" value="ECO:0000303"/>
    <property type="project" value="FlyBase"/>
</dbReference>
<dbReference type="GO" id="GO:0007165">
    <property type="term" value="P:signal transduction"/>
    <property type="evidence" value="ECO:0007669"/>
    <property type="project" value="UniProtKB-KW"/>
</dbReference>
<dbReference type="InterPro" id="IPR013604">
    <property type="entry name" value="7TM_chemorcpt"/>
</dbReference>
<dbReference type="PANTHER" id="PTHR21143:SF131">
    <property type="entry name" value="GUSTATORY AND ODORANT RECEPTOR 63A-RELATED"/>
    <property type="match status" value="1"/>
</dbReference>
<dbReference type="PANTHER" id="PTHR21143">
    <property type="entry name" value="INVERTEBRATE GUSTATORY RECEPTOR"/>
    <property type="match status" value="1"/>
</dbReference>
<dbReference type="Pfam" id="PF08395">
    <property type="entry name" value="7tm_7"/>
    <property type="match status" value="1"/>
</dbReference>